<feature type="chain" id="PRO_0000316334" description="Mlc titration factor A">
    <location>
        <begin position="1"/>
        <end position="270"/>
    </location>
</feature>
<feature type="binding site" evidence="1">
    <location>
        <position position="111"/>
    </location>
    <ligand>
        <name>Zn(2+)</name>
        <dbReference type="ChEBI" id="CHEBI:29105"/>
    </ligand>
</feature>
<feature type="binding site" evidence="1">
    <location>
        <position position="148"/>
    </location>
    <ligand>
        <name>Zn(2+)</name>
        <dbReference type="ChEBI" id="CHEBI:29105"/>
    </ligand>
</feature>
<feature type="binding site" evidence="1">
    <location>
        <position position="152"/>
    </location>
    <ligand>
        <name>Zn(2+)</name>
        <dbReference type="ChEBI" id="CHEBI:29105"/>
    </ligand>
</feature>
<feature type="binding site" evidence="1">
    <location>
        <position position="211"/>
    </location>
    <ligand>
        <name>Zn(2+)</name>
        <dbReference type="ChEBI" id="CHEBI:29105"/>
    </ligand>
</feature>
<accession>A7FJD3</accession>
<reference key="1">
    <citation type="journal article" date="2007" name="PLoS Genet.">
        <title>The complete genome sequence of Yersinia pseudotuberculosis IP31758, the causative agent of Far East scarlet-like fever.</title>
        <authorList>
            <person name="Eppinger M."/>
            <person name="Rosovitz M.J."/>
            <person name="Fricke W.F."/>
            <person name="Rasko D.A."/>
            <person name="Kokorina G."/>
            <person name="Fayolle C."/>
            <person name="Lindler L.E."/>
            <person name="Carniel E."/>
            <person name="Ravel J."/>
        </authorList>
    </citation>
    <scope>NUCLEOTIDE SEQUENCE [LARGE SCALE GENOMIC DNA]</scope>
    <source>
        <strain>IP 31758</strain>
    </source>
</reference>
<comment type="function">
    <text evidence="1">Involved in the modulation of the activity of the glucose-phosphotransferase system (glucose-PTS). Interacts with the transcriptional repressor Mlc, preventing its interaction with DNA and leading to the modulation of expression of genes regulated by Mlc, including ptsG, which encodes the PTS system glucose-specific EIICB component.</text>
</comment>
<comment type="function">
    <text evidence="1">Shows zinc-dependent metallopeptidase activity.</text>
</comment>
<comment type="cofactor">
    <cofactor evidence="1">
        <name>Zn(2+)</name>
        <dbReference type="ChEBI" id="CHEBI:29105"/>
    </cofactor>
    <text evidence="1">Binds 1 zinc ion per subunit.</text>
</comment>
<comment type="subunit">
    <text evidence="1">Interacts with Mlc.</text>
</comment>
<comment type="subcellular location">
    <subcellularLocation>
        <location evidence="1">Cytoplasm</location>
    </subcellularLocation>
</comment>
<comment type="similarity">
    <text evidence="1">Belongs to the MtfA family.</text>
</comment>
<keyword id="KW-0031">Aminopeptidase</keyword>
<keyword id="KW-0963">Cytoplasm</keyword>
<keyword id="KW-0378">Hydrolase</keyword>
<keyword id="KW-0479">Metal-binding</keyword>
<keyword id="KW-0482">Metalloprotease</keyword>
<keyword id="KW-0645">Protease</keyword>
<keyword id="KW-0862">Zinc</keyword>
<gene>
    <name evidence="1" type="primary">mtfA</name>
    <name type="ordered locus">YpsIP31758_2392</name>
</gene>
<name>MTFA_YERP3</name>
<sequence>MIKWLWKANKPQAEMLAQWHEALNIPLLAPLNEPEQQRLVSVASQLLQQKRFIPLQGLILTPLMQARLALLFALPVMELGAKWLDGFHEVLIYPSPFIVAEDWQDDLGLVHSGQSVQSGQSWEQGPIVLNWQDIQDSFDLSGFNLVIHEAAHKLDMRNGGHSNGVPPIAMRDVAVWEHDLHHAMDNIQDEIDMVGVEGASMDAYAASNPAECFAVLSEYFFSAPELLEGRFPAVYQHFCRFYRQDPLARLKRWENSLADNPPPENTHSHR</sequence>
<evidence type="ECO:0000255" key="1">
    <source>
        <dbReference type="HAMAP-Rule" id="MF_01593"/>
    </source>
</evidence>
<organism>
    <name type="scientific">Yersinia pseudotuberculosis serotype O:1b (strain IP 31758)</name>
    <dbReference type="NCBI Taxonomy" id="349747"/>
    <lineage>
        <taxon>Bacteria</taxon>
        <taxon>Pseudomonadati</taxon>
        <taxon>Pseudomonadota</taxon>
        <taxon>Gammaproteobacteria</taxon>
        <taxon>Enterobacterales</taxon>
        <taxon>Yersiniaceae</taxon>
        <taxon>Yersinia</taxon>
    </lineage>
</organism>
<protein>
    <recommendedName>
        <fullName evidence="1">Mlc titration factor A</fullName>
    </recommendedName>
    <alternativeName>
        <fullName evidence="1">Probable zinc metallopeptidase MtfA</fullName>
        <ecNumber evidence="1">3.4.11.-</ecNumber>
    </alternativeName>
</protein>
<dbReference type="EC" id="3.4.11.-" evidence="1"/>
<dbReference type="EMBL" id="CP000720">
    <property type="protein sequence ID" value="ABS48090.1"/>
    <property type="molecule type" value="Genomic_DNA"/>
</dbReference>
<dbReference type="RefSeq" id="WP_002211042.1">
    <property type="nucleotide sequence ID" value="NC_009708.1"/>
</dbReference>
<dbReference type="SMR" id="A7FJD3"/>
<dbReference type="GeneID" id="57976845"/>
<dbReference type="KEGG" id="ypi:YpsIP31758_2392"/>
<dbReference type="HOGENOM" id="CLU_063037_2_0_6"/>
<dbReference type="Proteomes" id="UP000002412">
    <property type="component" value="Chromosome"/>
</dbReference>
<dbReference type="GO" id="GO:0005829">
    <property type="term" value="C:cytosol"/>
    <property type="evidence" value="ECO:0007669"/>
    <property type="project" value="TreeGrafter"/>
</dbReference>
<dbReference type="GO" id="GO:0004177">
    <property type="term" value="F:aminopeptidase activity"/>
    <property type="evidence" value="ECO:0007669"/>
    <property type="project" value="UniProtKB-UniRule"/>
</dbReference>
<dbReference type="GO" id="GO:0008237">
    <property type="term" value="F:metallopeptidase activity"/>
    <property type="evidence" value="ECO:0007669"/>
    <property type="project" value="UniProtKB-UniRule"/>
</dbReference>
<dbReference type="GO" id="GO:0008270">
    <property type="term" value="F:zinc ion binding"/>
    <property type="evidence" value="ECO:0007669"/>
    <property type="project" value="UniProtKB-UniRule"/>
</dbReference>
<dbReference type="GO" id="GO:0006508">
    <property type="term" value="P:proteolysis"/>
    <property type="evidence" value="ECO:0007669"/>
    <property type="project" value="UniProtKB-KW"/>
</dbReference>
<dbReference type="CDD" id="cd20169">
    <property type="entry name" value="Peptidase_M90_mtfA"/>
    <property type="match status" value="1"/>
</dbReference>
<dbReference type="FunFam" id="1.10.472.150:FF:000001">
    <property type="entry name" value="Protein MtfA"/>
    <property type="match status" value="1"/>
</dbReference>
<dbReference type="FunFam" id="3.40.390.10:FF:000012">
    <property type="entry name" value="Protein MtfA"/>
    <property type="match status" value="1"/>
</dbReference>
<dbReference type="Gene3D" id="3.40.390.10">
    <property type="entry name" value="Collagenase (Catalytic Domain)"/>
    <property type="match status" value="1"/>
</dbReference>
<dbReference type="Gene3D" id="1.10.472.150">
    <property type="entry name" value="Glucose-regulated metallo-peptidase M90, N-terminal domain"/>
    <property type="match status" value="1"/>
</dbReference>
<dbReference type="HAMAP" id="MF_01593">
    <property type="entry name" value="MtfA"/>
    <property type="match status" value="1"/>
</dbReference>
<dbReference type="InterPro" id="IPR024079">
    <property type="entry name" value="MetalloPept_cat_dom_sf"/>
</dbReference>
<dbReference type="InterPro" id="IPR057256">
    <property type="entry name" value="MtfA_enterob"/>
</dbReference>
<dbReference type="InterPro" id="IPR010384">
    <property type="entry name" value="MtfA_fam"/>
</dbReference>
<dbReference type="InterPro" id="IPR042252">
    <property type="entry name" value="MtfA_N"/>
</dbReference>
<dbReference type="NCBIfam" id="NF011939">
    <property type="entry name" value="PRK15410.1"/>
    <property type="match status" value="1"/>
</dbReference>
<dbReference type="PANTHER" id="PTHR30164">
    <property type="entry name" value="MTFA PEPTIDASE"/>
    <property type="match status" value="1"/>
</dbReference>
<dbReference type="PANTHER" id="PTHR30164:SF2">
    <property type="entry name" value="PROTEIN MTFA"/>
    <property type="match status" value="1"/>
</dbReference>
<dbReference type="Pfam" id="PF06167">
    <property type="entry name" value="Peptidase_M90"/>
    <property type="match status" value="1"/>
</dbReference>
<dbReference type="SUPFAM" id="SSF55486">
    <property type="entry name" value="Metalloproteases ('zincins'), catalytic domain"/>
    <property type="match status" value="1"/>
</dbReference>
<proteinExistence type="inferred from homology"/>